<dbReference type="EMBL" id="AF023181">
    <property type="protein sequence ID" value="AAC98902.1"/>
    <property type="molecule type" value="Genomic_DNA"/>
</dbReference>
<dbReference type="EMBL" id="AL591974">
    <property type="protein sequence ID" value="CAD00743.1"/>
    <property type="molecule type" value="Genomic_DNA"/>
</dbReference>
<dbReference type="PIR" id="AI1101">
    <property type="entry name" value="AI1101"/>
</dbReference>
<dbReference type="RefSeq" id="NP_463747.1">
    <property type="nucleotide sequence ID" value="NC_003210.1"/>
</dbReference>
<dbReference type="RefSeq" id="WP_003722745.1">
    <property type="nucleotide sequence ID" value="NC_003210.1"/>
</dbReference>
<dbReference type="SMR" id="Q9ZIM1"/>
<dbReference type="STRING" id="169963.gene:17592852"/>
<dbReference type="PaxDb" id="169963-lmo0216"/>
<dbReference type="EnsemblBacteria" id="CAD00743">
    <property type="protein sequence ID" value="CAD00743"/>
    <property type="gene ID" value="CAD00743"/>
</dbReference>
<dbReference type="GeneID" id="987050"/>
<dbReference type="KEGG" id="lmo:lmo0216"/>
<dbReference type="PATRIC" id="fig|169963.11.peg.221"/>
<dbReference type="eggNOG" id="COG1188">
    <property type="taxonomic scope" value="Bacteria"/>
</dbReference>
<dbReference type="HOGENOM" id="CLU_101003_4_0_9"/>
<dbReference type="OrthoDB" id="9805210at2"/>
<dbReference type="PhylomeDB" id="Q9ZIM1"/>
<dbReference type="Proteomes" id="UP000000817">
    <property type="component" value="Chromosome"/>
</dbReference>
<dbReference type="GO" id="GO:0019843">
    <property type="term" value="F:rRNA binding"/>
    <property type="evidence" value="ECO:0007669"/>
    <property type="project" value="UniProtKB-KW"/>
</dbReference>
<dbReference type="GO" id="GO:0000049">
    <property type="term" value="F:tRNA binding"/>
    <property type="evidence" value="ECO:0007669"/>
    <property type="project" value="UniProtKB-KW"/>
</dbReference>
<dbReference type="GO" id="GO:0006412">
    <property type="term" value="P:translation"/>
    <property type="evidence" value="ECO:0007669"/>
    <property type="project" value="UniProtKB-KW"/>
</dbReference>
<dbReference type="CDD" id="cd00165">
    <property type="entry name" value="S4"/>
    <property type="match status" value="1"/>
</dbReference>
<dbReference type="Gene3D" id="3.10.290.10">
    <property type="entry name" value="RNA-binding S4 domain"/>
    <property type="match status" value="1"/>
</dbReference>
<dbReference type="HAMAP" id="MF_00871">
    <property type="entry name" value="RqcP"/>
    <property type="match status" value="1"/>
</dbReference>
<dbReference type="InterPro" id="IPR025490">
    <property type="entry name" value="RqcP"/>
</dbReference>
<dbReference type="InterPro" id="IPR002942">
    <property type="entry name" value="S4_RNA-bd"/>
</dbReference>
<dbReference type="InterPro" id="IPR036986">
    <property type="entry name" value="S4_RNA-bd_sf"/>
</dbReference>
<dbReference type="Pfam" id="PF01479">
    <property type="entry name" value="S4"/>
    <property type="match status" value="1"/>
</dbReference>
<dbReference type="PIRSF" id="PIRSF038881">
    <property type="entry name" value="RNAbp_HP1423"/>
    <property type="match status" value="1"/>
</dbReference>
<dbReference type="SMART" id="SM00363">
    <property type="entry name" value="S4"/>
    <property type="match status" value="1"/>
</dbReference>
<dbReference type="SUPFAM" id="SSF55174">
    <property type="entry name" value="Alpha-L RNA-binding motif"/>
    <property type="match status" value="1"/>
</dbReference>
<dbReference type="PROSITE" id="PS50889">
    <property type="entry name" value="S4"/>
    <property type="match status" value="1"/>
</dbReference>
<comment type="function">
    <text evidence="1">Key component of the ribosome quality control system (RQC), a ribosome-associated complex that mediates the extraction of incompletely synthesized nascent chains from stalled ribosomes and their subsequent degradation. RqcH recruits Ala-charged tRNA, and with RqcP directs the elongation of stalled nascent chains on 50S ribosomal subunits, leading to non-templated C-terminal alanine extensions (Ala tail). The Ala tail promotes nascent chain degradation. RqcP is associated with the translocation-like movement of the peptidyl-tRNA from the A-site into the P-site.</text>
</comment>
<comment type="subunit">
    <text evidence="1">Associates with stalled 50S ribosomal subunits. Binds to RqcH, 23S rRNA and the P-site tRNA. Does not require RqcH for association with 50S subunits.</text>
</comment>
<comment type="similarity">
    <text evidence="1">Belongs to the RqcP family.</text>
</comment>
<protein>
    <recommendedName>
        <fullName evidence="1">RQC P-site tRNA stabilizing factor</fullName>
        <shortName evidence="1">RqcP</shortName>
    </recommendedName>
    <alternativeName>
        <fullName evidence="1">Ribosome-associated protein quality control protein P</fullName>
    </alternativeName>
</protein>
<keyword id="KW-0648">Protein biosynthesis</keyword>
<keyword id="KW-1185">Reference proteome</keyword>
<keyword id="KW-0694">RNA-binding</keyword>
<keyword id="KW-0699">rRNA-binding</keyword>
<keyword id="KW-0820">tRNA-binding</keyword>
<reference key="1">
    <citation type="submission" date="1997-09" db="EMBL/GenBank/DDBJ databases">
        <authorList>
            <person name="Zheng W."/>
            <person name="Kathariou S."/>
        </authorList>
    </citation>
    <scope>NUCLEOTIDE SEQUENCE [GENOMIC DNA]</scope>
    <source>
        <strain>4b1 / Serotype 4b</strain>
    </source>
</reference>
<reference key="2">
    <citation type="journal article" date="2001" name="Science">
        <title>Comparative genomics of Listeria species.</title>
        <authorList>
            <person name="Glaser P."/>
            <person name="Frangeul L."/>
            <person name="Buchrieser C."/>
            <person name="Rusniok C."/>
            <person name="Amend A."/>
            <person name="Baquero F."/>
            <person name="Berche P."/>
            <person name="Bloecker H."/>
            <person name="Brandt P."/>
            <person name="Chakraborty T."/>
            <person name="Charbit A."/>
            <person name="Chetouani F."/>
            <person name="Couve E."/>
            <person name="de Daruvar A."/>
            <person name="Dehoux P."/>
            <person name="Domann E."/>
            <person name="Dominguez-Bernal G."/>
            <person name="Duchaud E."/>
            <person name="Durant L."/>
            <person name="Dussurget O."/>
            <person name="Entian K.-D."/>
            <person name="Fsihi H."/>
            <person name="Garcia-del Portillo F."/>
            <person name="Garrido P."/>
            <person name="Gautier L."/>
            <person name="Goebel W."/>
            <person name="Gomez-Lopez N."/>
            <person name="Hain T."/>
            <person name="Hauf J."/>
            <person name="Jackson D."/>
            <person name="Jones L.-M."/>
            <person name="Kaerst U."/>
            <person name="Kreft J."/>
            <person name="Kuhn M."/>
            <person name="Kunst F."/>
            <person name="Kurapkat G."/>
            <person name="Madueno E."/>
            <person name="Maitournam A."/>
            <person name="Mata Vicente J."/>
            <person name="Ng E."/>
            <person name="Nedjari H."/>
            <person name="Nordsiek G."/>
            <person name="Novella S."/>
            <person name="de Pablos B."/>
            <person name="Perez-Diaz J.-C."/>
            <person name="Purcell R."/>
            <person name="Remmel B."/>
            <person name="Rose M."/>
            <person name="Schlueter T."/>
            <person name="Simoes N."/>
            <person name="Tierrez A."/>
            <person name="Vazquez-Boland J.-A."/>
            <person name="Voss H."/>
            <person name="Wehland J."/>
            <person name="Cossart P."/>
        </authorList>
    </citation>
    <scope>NUCLEOTIDE SEQUENCE [LARGE SCALE GENOMIC DNA]</scope>
    <source>
        <strain>ATCC BAA-679 / EGD-e</strain>
    </source>
</reference>
<gene>
    <name evidence="1" type="primary">rqcP</name>
    <name type="ordered locus">lmo0216</name>
</gene>
<name>RQCP_LISMO</name>
<evidence type="ECO:0000255" key="1">
    <source>
        <dbReference type="HAMAP-Rule" id="MF_00871"/>
    </source>
</evidence>
<accession>Q9ZIM1</accession>
<organism>
    <name type="scientific">Listeria monocytogenes serovar 1/2a (strain ATCC BAA-679 / EGD-e)</name>
    <dbReference type="NCBI Taxonomy" id="169963"/>
    <lineage>
        <taxon>Bacteria</taxon>
        <taxon>Bacillati</taxon>
        <taxon>Bacillota</taxon>
        <taxon>Bacilli</taxon>
        <taxon>Bacillales</taxon>
        <taxon>Listeriaceae</taxon>
        <taxon>Listeria</taxon>
    </lineage>
</organism>
<sequence length="92" mass="10435">MATTMRLDKYLKVSRLIKRRTVAKEVAEKGRIAVNGVTAKPGTNVKSGDELVIRFGPKIVTAKIERLEENAKKEQATEMYTIIKEERTDESR</sequence>
<proteinExistence type="inferred from homology"/>
<feature type="chain" id="PRO_0000201750" description="RQC P-site tRNA stabilizing factor">
    <location>
        <begin position="1"/>
        <end position="92"/>
    </location>
</feature>
<feature type="domain" description="S4 RNA-binding" evidence="1">
    <location>
        <begin position="5"/>
        <end position="65"/>
    </location>
</feature>